<gene>
    <name type="primary">LAC17</name>
    <name type="ordered locus">Os11g0108700</name>
    <name type="ordered locus">LOC_Os11g01730</name>
    <name type="ORF">OsJ_031367</name>
</gene>
<name>LAC17_ORYSJ</name>
<organism>
    <name type="scientific">Oryza sativa subsp. japonica</name>
    <name type="common">Rice</name>
    <dbReference type="NCBI Taxonomy" id="39947"/>
    <lineage>
        <taxon>Eukaryota</taxon>
        <taxon>Viridiplantae</taxon>
        <taxon>Streptophyta</taxon>
        <taxon>Embryophyta</taxon>
        <taxon>Tracheophyta</taxon>
        <taxon>Spermatophyta</taxon>
        <taxon>Magnoliopsida</taxon>
        <taxon>Liliopsida</taxon>
        <taxon>Poales</taxon>
        <taxon>Poaceae</taxon>
        <taxon>BOP clade</taxon>
        <taxon>Oryzoideae</taxon>
        <taxon>Oryzeae</taxon>
        <taxon>Oryzinae</taxon>
        <taxon>Oryza</taxon>
        <taxon>Oryza sativa</taxon>
    </lineage>
</organism>
<feature type="signal peptide" evidence="2">
    <location>
        <begin position="1"/>
        <end position="22"/>
    </location>
</feature>
<feature type="chain" id="PRO_0000291901" description="Putative laccase-17">
    <location>
        <begin position="23"/>
        <end position="567"/>
    </location>
</feature>
<feature type="domain" description="Plastocyanin-like 1">
    <location>
        <begin position="30"/>
        <end position="146"/>
    </location>
</feature>
<feature type="domain" description="Plastocyanin-like 2">
    <location>
        <begin position="158"/>
        <end position="310"/>
    </location>
</feature>
<feature type="domain" description="Plastocyanin-like 3">
    <location>
        <begin position="415"/>
        <end position="551"/>
    </location>
</feature>
<feature type="binding site" evidence="1">
    <location>
        <position position="80"/>
    </location>
    <ligand>
        <name>Cu cation</name>
        <dbReference type="ChEBI" id="CHEBI:23378"/>
        <label>1</label>
    </ligand>
</feature>
<feature type="binding site" evidence="1">
    <location>
        <position position="82"/>
    </location>
    <ligand>
        <name>Cu cation</name>
        <dbReference type="ChEBI" id="CHEBI:23378"/>
        <label>2</label>
    </ligand>
</feature>
<feature type="binding site" evidence="1">
    <location>
        <position position="125"/>
    </location>
    <ligand>
        <name>Cu cation</name>
        <dbReference type="ChEBI" id="CHEBI:23378"/>
        <label>2</label>
    </ligand>
</feature>
<feature type="binding site" evidence="1">
    <location>
        <position position="127"/>
    </location>
    <ligand>
        <name>Cu cation</name>
        <dbReference type="ChEBI" id="CHEBI:23378"/>
        <label>3</label>
    </ligand>
</feature>
<feature type="binding site" evidence="1">
    <location>
        <position position="468"/>
    </location>
    <ligand>
        <name>Cu cation</name>
        <dbReference type="ChEBI" id="CHEBI:23378"/>
        <label>4</label>
    </ligand>
</feature>
<feature type="binding site" evidence="1">
    <location>
        <position position="471"/>
    </location>
    <ligand>
        <name>Cu cation</name>
        <dbReference type="ChEBI" id="CHEBI:23378"/>
        <label>1</label>
    </ligand>
</feature>
<feature type="binding site" evidence="1">
    <location>
        <position position="473"/>
    </location>
    <ligand>
        <name>Cu cation</name>
        <dbReference type="ChEBI" id="CHEBI:23378"/>
        <label>3</label>
    </ligand>
</feature>
<feature type="binding site" evidence="1">
    <location>
        <position position="530"/>
    </location>
    <ligand>
        <name>Cu cation</name>
        <dbReference type="ChEBI" id="CHEBI:23378"/>
        <label>3</label>
    </ligand>
</feature>
<feature type="binding site" evidence="1">
    <location>
        <position position="531"/>
    </location>
    <ligand>
        <name>Cu cation</name>
        <dbReference type="ChEBI" id="CHEBI:23378"/>
        <label>4</label>
    </ligand>
</feature>
<feature type="binding site" evidence="1">
    <location>
        <position position="532"/>
    </location>
    <ligand>
        <name>Cu cation</name>
        <dbReference type="ChEBI" id="CHEBI:23378"/>
        <label>2</label>
    </ligand>
</feature>
<feature type="binding site" evidence="1">
    <location>
        <position position="536"/>
    </location>
    <ligand>
        <name>Cu cation</name>
        <dbReference type="ChEBI" id="CHEBI:23378"/>
        <label>4</label>
    </ligand>
</feature>
<feature type="glycosylation site" description="N-linked (GlcNAc...) asparagine" evidence="2">
    <location>
        <position position="76"/>
    </location>
</feature>
<feature type="glycosylation site" description="N-linked (GlcNAc...) asparagine" evidence="2">
    <location>
        <position position="187"/>
    </location>
</feature>
<feature type="glycosylation site" description="N-linked (GlcNAc...) asparagine" evidence="2">
    <location>
        <position position="241"/>
    </location>
</feature>
<feature type="glycosylation site" description="N-linked (GlcNAc...) asparagine" evidence="2">
    <location>
        <position position="298"/>
    </location>
</feature>
<feature type="glycosylation site" description="N-linked (GlcNAc...) asparagine" evidence="2">
    <location>
        <position position="312"/>
    </location>
</feature>
<feature type="glycosylation site" description="N-linked (GlcNAc...) asparagine" evidence="2">
    <location>
        <position position="327"/>
    </location>
</feature>
<feature type="glycosylation site" description="N-linked (GlcNAc...) asparagine" evidence="2">
    <location>
        <position position="365"/>
    </location>
</feature>
<feature type="glycosylation site" description="N-linked (GlcNAc...) asparagine" evidence="2">
    <location>
        <position position="368"/>
    </location>
</feature>
<feature type="glycosylation site" description="N-linked (GlcNAc...) asparagine" evidence="2">
    <location>
        <position position="378"/>
    </location>
</feature>
<feature type="glycosylation site" description="N-linked (GlcNAc...) asparagine" evidence="2">
    <location>
        <position position="388"/>
    </location>
</feature>
<feature type="glycosylation site" description="N-linked (GlcNAc...) asparagine" evidence="2">
    <location>
        <position position="430"/>
    </location>
</feature>
<dbReference type="EC" id="1.10.3.2"/>
<dbReference type="EMBL" id="DP000010">
    <property type="protein sequence ID" value="ABA91124.1"/>
    <property type="molecule type" value="Genomic_DNA"/>
</dbReference>
<dbReference type="EMBL" id="AP008217">
    <property type="protein sequence ID" value="BAF27393.2"/>
    <property type="status" value="ALT_SEQ"/>
    <property type="molecule type" value="Genomic_DNA"/>
</dbReference>
<dbReference type="EMBL" id="AP014967">
    <property type="status" value="NOT_ANNOTATED_CDS"/>
    <property type="molecule type" value="Genomic_DNA"/>
</dbReference>
<dbReference type="EMBL" id="CM000148">
    <property type="protein sequence ID" value="EAZ17158.1"/>
    <property type="molecule type" value="Genomic_DNA"/>
</dbReference>
<dbReference type="SMR" id="Q2RBK2"/>
<dbReference type="STRING" id="39947.Q2RBK2"/>
<dbReference type="GlyCosmos" id="Q2RBK2">
    <property type="glycosylation" value="11 sites, No reported glycans"/>
</dbReference>
<dbReference type="PaxDb" id="39947-Q2RBK2"/>
<dbReference type="KEGG" id="dosa:Os11g0108700"/>
<dbReference type="KEGG" id="osa:4349566"/>
<dbReference type="InParanoid" id="Q2RBK2"/>
<dbReference type="OrthoDB" id="2121828at2759"/>
<dbReference type="Proteomes" id="UP000000763">
    <property type="component" value="Chromosome 11"/>
</dbReference>
<dbReference type="Proteomes" id="UP000007752">
    <property type="component" value="Chromosome 11"/>
</dbReference>
<dbReference type="Proteomes" id="UP000059680">
    <property type="component" value="Chromosome 11"/>
</dbReference>
<dbReference type="GO" id="GO:0048046">
    <property type="term" value="C:apoplast"/>
    <property type="evidence" value="ECO:0007669"/>
    <property type="project" value="UniProtKB-SubCell"/>
</dbReference>
<dbReference type="GO" id="GO:0005507">
    <property type="term" value="F:copper ion binding"/>
    <property type="evidence" value="ECO:0007669"/>
    <property type="project" value="InterPro"/>
</dbReference>
<dbReference type="GO" id="GO:0052716">
    <property type="term" value="F:hydroquinone:oxygen oxidoreductase activity"/>
    <property type="evidence" value="ECO:0007669"/>
    <property type="project" value="UniProtKB-EC"/>
</dbReference>
<dbReference type="GO" id="GO:0016491">
    <property type="term" value="F:oxidoreductase activity"/>
    <property type="evidence" value="ECO:0000318"/>
    <property type="project" value="GO_Central"/>
</dbReference>
<dbReference type="GO" id="GO:0046274">
    <property type="term" value="P:lignin catabolic process"/>
    <property type="evidence" value="ECO:0007669"/>
    <property type="project" value="UniProtKB-KW"/>
</dbReference>
<dbReference type="CDD" id="cd13849">
    <property type="entry name" value="CuRO_1_LCC_plant"/>
    <property type="match status" value="1"/>
</dbReference>
<dbReference type="CDD" id="cd13875">
    <property type="entry name" value="CuRO_2_LCC_plant"/>
    <property type="match status" value="1"/>
</dbReference>
<dbReference type="CDD" id="cd13897">
    <property type="entry name" value="CuRO_3_LCC_plant"/>
    <property type="match status" value="1"/>
</dbReference>
<dbReference type="FunFam" id="2.60.40.420:FF:000049">
    <property type="entry name" value="Laccase"/>
    <property type="match status" value="1"/>
</dbReference>
<dbReference type="FunFam" id="2.60.40.420:FF:000062">
    <property type="entry name" value="Laccase"/>
    <property type="match status" value="1"/>
</dbReference>
<dbReference type="Gene3D" id="2.60.40.420">
    <property type="entry name" value="Cupredoxins - blue copper proteins"/>
    <property type="match status" value="3"/>
</dbReference>
<dbReference type="InterPro" id="IPR011707">
    <property type="entry name" value="Cu-oxidase-like_N"/>
</dbReference>
<dbReference type="InterPro" id="IPR001117">
    <property type="entry name" value="Cu-oxidase_2nd"/>
</dbReference>
<dbReference type="InterPro" id="IPR011706">
    <property type="entry name" value="Cu-oxidase_C"/>
</dbReference>
<dbReference type="InterPro" id="IPR045087">
    <property type="entry name" value="Cu-oxidase_fam"/>
</dbReference>
<dbReference type="InterPro" id="IPR033138">
    <property type="entry name" value="Cu_oxidase_CS"/>
</dbReference>
<dbReference type="InterPro" id="IPR002355">
    <property type="entry name" value="Cu_oxidase_Cu_BS"/>
</dbReference>
<dbReference type="InterPro" id="IPR008972">
    <property type="entry name" value="Cupredoxin"/>
</dbReference>
<dbReference type="InterPro" id="IPR034288">
    <property type="entry name" value="CuRO_1_LCC"/>
</dbReference>
<dbReference type="InterPro" id="IPR034285">
    <property type="entry name" value="CuRO_2_LCC"/>
</dbReference>
<dbReference type="InterPro" id="IPR034289">
    <property type="entry name" value="CuRO_3_LCC"/>
</dbReference>
<dbReference type="InterPro" id="IPR017761">
    <property type="entry name" value="Laccase"/>
</dbReference>
<dbReference type="NCBIfam" id="TIGR03389">
    <property type="entry name" value="laccase"/>
    <property type="match status" value="1"/>
</dbReference>
<dbReference type="PANTHER" id="PTHR11709:SF457">
    <property type="entry name" value="LACCASE-17-RELATED"/>
    <property type="match status" value="1"/>
</dbReference>
<dbReference type="PANTHER" id="PTHR11709">
    <property type="entry name" value="MULTI-COPPER OXIDASE"/>
    <property type="match status" value="1"/>
</dbReference>
<dbReference type="Pfam" id="PF00394">
    <property type="entry name" value="Cu-oxidase"/>
    <property type="match status" value="1"/>
</dbReference>
<dbReference type="Pfam" id="PF07731">
    <property type="entry name" value="Cu-oxidase_2"/>
    <property type="match status" value="1"/>
</dbReference>
<dbReference type="Pfam" id="PF07732">
    <property type="entry name" value="Cu-oxidase_3"/>
    <property type="match status" value="1"/>
</dbReference>
<dbReference type="SUPFAM" id="SSF49503">
    <property type="entry name" value="Cupredoxins"/>
    <property type="match status" value="3"/>
</dbReference>
<dbReference type="PROSITE" id="PS00079">
    <property type="entry name" value="MULTICOPPER_OXIDASE1"/>
    <property type="match status" value="1"/>
</dbReference>
<dbReference type="PROSITE" id="PS00080">
    <property type="entry name" value="MULTICOPPER_OXIDASE2"/>
    <property type="match status" value="1"/>
</dbReference>
<proteinExistence type="inferred from homology"/>
<comment type="function">
    <text evidence="1">Lignin degradation and detoxification of lignin-derived products.</text>
</comment>
<comment type="catalytic activity">
    <reaction>
        <text>4 hydroquinone + O2 = 4 benzosemiquinone + 2 H2O</text>
        <dbReference type="Rhea" id="RHEA:11276"/>
        <dbReference type="ChEBI" id="CHEBI:15377"/>
        <dbReference type="ChEBI" id="CHEBI:15379"/>
        <dbReference type="ChEBI" id="CHEBI:17594"/>
        <dbReference type="ChEBI" id="CHEBI:17977"/>
        <dbReference type="EC" id="1.10.3.2"/>
    </reaction>
</comment>
<comment type="cofactor">
    <cofactor evidence="1">
        <name>Cu cation</name>
        <dbReference type="ChEBI" id="CHEBI:23378"/>
    </cofactor>
    <text evidence="1">Binds 4 Cu cations per monomer.</text>
</comment>
<comment type="subcellular location">
    <subcellularLocation>
        <location evidence="3">Secreted</location>
        <location evidence="3">Extracellular space</location>
        <location evidence="3">Apoplast</location>
    </subcellularLocation>
</comment>
<comment type="similarity">
    <text evidence="3">Belongs to the multicopper oxidase family.</text>
</comment>
<comment type="sequence caution" evidence="3">
    <conflict type="erroneous gene model prediction">
        <sequence resource="EMBL-CDS" id="BAF27393"/>
    </conflict>
</comment>
<keyword id="KW-0052">Apoplast</keyword>
<keyword id="KW-0186">Copper</keyword>
<keyword id="KW-0325">Glycoprotein</keyword>
<keyword id="KW-0439">Lignin degradation</keyword>
<keyword id="KW-0479">Metal-binding</keyword>
<keyword id="KW-0560">Oxidoreductase</keyword>
<keyword id="KW-1185">Reference proteome</keyword>
<keyword id="KW-0677">Repeat</keyword>
<keyword id="KW-0964">Secreted</keyword>
<keyword id="KW-0732">Signal</keyword>
<reference key="1">
    <citation type="journal article" date="2005" name="BMC Biol.">
        <title>The sequence of rice chromosomes 11 and 12, rich in disease resistance genes and recent gene duplications.</title>
        <authorList>
            <consortium name="The rice chromosomes 11 and 12 sequencing consortia"/>
        </authorList>
    </citation>
    <scope>NUCLEOTIDE SEQUENCE [LARGE SCALE GENOMIC DNA]</scope>
    <source>
        <strain>cv. Nipponbare</strain>
    </source>
</reference>
<reference key="2">
    <citation type="journal article" date="2005" name="Nature">
        <title>The map-based sequence of the rice genome.</title>
        <authorList>
            <consortium name="International rice genome sequencing project (IRGSP)"/>
        </authorList>
    </citation>
    <scope>NUCLEOTIDE SEQUENCE [LARGE SCALE GENOMIC DNA]</scope>
    <source>
        <strain>cv. Nipponbare</strain>
    </source>
</reference>
<reference key="3">
    <citation type="journal article" date="2008" name="Nucleic Acids Res.">
        <title>The rice annotation project database (RAP-DB): 2008 update.</title>
        <authorList>
            <consortium name="The rice annotation project (RAP)"/>
        </authorList>
    </citation>
    <scope>GENOME REANNOTATION</scope>
    <source>
        <strain>cv. Nipponbare</strain>
    </source>
</reference>
<reference key="4">
    <citation type="journal article" date="2013" name="Rice">
        <title>Improvement of the Oryza sativa Nipponbare reference genome using next generation sequence and optical map data.</title>
        <authorList>
            <person name="Kawahara Y."/>
            <person name="de la Bastide M."/>
            <person name="Hamilton J.P."/>
            <person name="Kanamori H."/>
            <person name="McCombie W.R."/>
            <person name="Ouyang S."/>
            <person name="Schwartz D.C."/>
            <person name="Tanaka T."/>
            <person name="Wu J."/>
            <person name="Zhou S."/>
            <person name="Childs K.L."/>
            <person name="Davidson R.M."/>
            <person name="Lin H."/>
            <person name="Quesada-Ocampo L."/>
            <person name="Vaillancourt B."/>
            <person name="Sakai H."/>
            <person name="Lee S.S."/>
            <person name="Kim J."/>
            <person name="Numa H."/>
            <person name="Itoh T."/>
            <person name="Buell C.R."/>
            <person name="Matsumoto T."/>
        </authorList>
    </citation>
    <scope>GENOME REANNOTATION</scope>
    <source>
        <strain>cv. Nipponbare</strain>
    </source>
</reference>
<reference key="5">
    <citation type="journal article" date="2005" name="PLoS Biol.">
        <title>The genomes of Oryza sativa: a history of duplications.</title>
        <authorList>
            <person name="Yu J."/>
            <person name="Wang J."/>
            <person name="Lin W."/>
            <person name="Li S."/>
            <person name="Li H."/>
            <person name="Zhou J."/>
            <person name="Ni P."/>
            <person name="Dong W."/>
            <person name="Hu S."/>
            <person name="Zeng C."/>
            <person name="Zhang J."/>
            <person name="Zhang Y."/>
            <person name="Li R."/>
            <person name="Xu Z."/>
            <person name="Li S."/>
            <person name="Li X."/>
            <person name="Zheng H."/>
            <person name="Cong L."/>
            <person name="Lin L."/>
            <person name="Yin J."/>
            <person name="Geng J."/>
            <person name="Li G."/>
            <person name="Shi J."/>
            <person name="Liu J."/>
            <person name="Lv H."/>
            <person name="Li J."/>
            <person name="Wang J."/>
            <person name="Deng Y."/>
            <person name="Ran L."/>
            <person name="Shi X."/>
            <person name="Wang X."/>
            <person name="Wu Q."/>
            <person name="Li C."/>
            <person name="Ren X."/>
            <person name="Wang J."/>
            <person name="Wang X."/>
            <person name="Li D."/>
            <person name="Liu D."/>
            <person name="Zhang X."/>
            <person name="Ji Z."/>
            <person name="Zhao W."/>
            <person name="Sun Y."/>
            <person name="Zhang Z."/>
            <person name="Bao J."/>
            <person name="Han Y."/>
            <person name="Dong L."/>
            <person name="Ji J."/>
            <person name="Chen P."/>
            <person name="Wu S."/>
            <person name="Liu J."/>
            <person name="Xiao Y."/>
            <person name="Bu D."/>
            <person name="Tan J."/>
            <person name="Yang L."/>
            <person name="Ye C."/>
            <person name="Zhang J."/>
            <person name="Xu J."/>
            <person name="Zhou Y."/>
            <person name="Yu Y."/>
            <person name="Zhang B."/>
            <person name="Zhuang S."/>
            <person name="Wei H."/>
            <person name="Liu B."/>
            <person name="Lei M."/>
            <person name="Yu H."/>
            <person name="Li Y."/>
            <person name="Xu H."/>
            <person name="Wei S."/>
            <person name="He X."/>
            <person name="Fang L."/>
            <person name="Zhang Z."/>
            <person name="Zhang Y."/>
            <person name="Huang X."/>
            <person name="Su Z."/>
            <person name="Tong W."/>
            <person name="Li J."/>
            <person name="Tong Z."/>
            <person name="Li S."/>
            <person name="Ye J."/>
            <person name="Wang L."/>
            <person name="Fang L."/>
            <person name="Lei T."/>
            <person name="Chen C.-S."/>
            <person name="Chen H.-C."/>
            <person name="Xu Z."/>
            <person name="Li H."/>
            <person name="Huang H."/>
            <person name="Zhang F."/>
            <person name="Xu H."/>
            <person name="Li N."/>
            <person name="Zhao C."/>
            <person name="Li S."/>
            <person name="Dong L."/>
            <person name="Huang Y."/>
            <person name="Li L."/>
            <person name="Xi Y."/>
            <person name="Qi Q."/>
            <person name="Li W."/>
            <person name="Zhang B."/>
            <person name="Hu W."/>
            <person name="Zhang Y."/>
            <person name="Tian X."/>
            <person name="Jiao Y."/>
            <person name="Liang X."/>
            <person name="Jin J."/>
            <person name="Gao L."/>
            <person name="Zheng W."/>
            <person name="Hao B."/>
            <person name="Liu S.-M."/>
            <person name="Wang W."/>
            <person name="Yuan L."/>
            <person name="Cao M."/>
            <person name="McDermott J."/>
            <person name="Samudrala R."/>
            <person name="Wang J."/>
            <person name="Wong G.K.-S."/>
            <person name="Yang H."/>
        </authorList>
    </citation>
    <scope>NUCLEOTIDE SEQUENCE [LARGE SCALE GENOMIC DNA]</scope>
    <source>
        <strain>cv. Nipponbare</strain>
    </source>
</reference>
<evidence type="ECO:0000250" key="1"/>
<evidence type="ECO:0000255" key="2"/>
<evidence type="ECO:0000305" key="3"/>
<accession>Q2RBK2</accession>
<protein>
    <recommendedName>
        <fullName>Putative laccase-17</fullName>
        <ecNumber>1.10.3.2</ecNumber>
    </recommendedName>
    <alternativeName>
        <fullName>Benzenediol:oxygen oxidoreductase 17</fullName>
    </alternativeName>
    <alternativeName>
        <fullName>Diphenol oxidase 17</fullName>
    </alternativeName>
    <alternativeName>
        <fullName>Urishiol oxidase 17</fullName>
    </alternativeName>
</protein>
<sequence length="567" mass="61544">MPSRGCSCWLLSLALLCSLAAAKEQYHEFVIRETTVKRLCKSHNIMTVNGQFPGPTLEINEGDSLIINLINRGRYNMTLHWHGVRQMRTGWSDGPEYVTQCPVRPGQSYRYRFTVAAQEGTLWWHAHSSWLRATVYGALLIRPRDGTSYPFDVQPTRELAPILLGEWWDMNPVDVVRAATRTGAAPNISDALTVNAQPGDLYSCSSHDTAVFPVTSGETNLLRFINAALNTELFVSLAGHNMTVVAADASYTKPYTTSLLLLAPGQTTDVLVTFDQPPGRYYLAARAYASAQGVPFDNTTTTAIFDYGAANNASSAAIAMPTLPAYNDTTAATAFTTNLRGLRKAELPSRVDESLFFTVGVGLFNCTNATAQQCGGPNGTRFAASINNVSFVLPSSTSILQAHHHGAPGGVFTADFPANPPVQFDYTAQNVSRALWQPVAGTKVYKLKYGSAVQVVLQGTNIFAGENHPIHLHGYDFYILAEGLGNFDAGADTGKFNVEDPPMRNTVGVPVNGWAVIRFVADNPGVWLMHCHLDVHITWGLAMAFLVDDGVGELQSLEAPPPDLPLC</sequence>